<gene>
    <name evidence="1" type="primary">mgsA</name>
    <name type="ordered locus">TERTU_2791</name>
</gene>
<proteinExistence type="inferred from homology"/>
<name>MGSA_TERTT</name>
<protein>
    <recommendedName>
        <fullName evidence="1">Methylglyoxal synthase</fullName>
        <shortName evidence="1">MGS</shortName>
        <ecNumber evidence="1">4.2.3.3</ecNumber>
    </recommendedName>
</protein>
<feature type="chain" id="PRO_1000211987" description="Methylglyoxal synthase">
    <location>
        <begin position="1"/>
        <end position="152"/>
    </location>
</feature>
<feature type="domain" description="MGS-like" evidence="1">
    <location>
        <begin position="6"/>
        <end position="152"/>
    </location>
</feature>
<feature type="active site" description="Proton donor/acceptor" evidence="1">
    <location>
        <position position="71"/>
    </location>
</feature>
<feature type="binding site" evidence="1">
    <location>
        <position position="19"/>
    </location>
    <ligand>
        <name>substrate</name>
    </ligand>
</feature>
<feature type="binding site" evidence="1">
    <location>
        <position position="23"/>
    </location>
    <ligand>
        <name>substrate</name>
    </ligand>
</feature>
<feature type="binding site" evidence="1">
    <location>
        <begin position="45"/>
        <end position="48"/>
    </location>
    <ligand>
        <name>substrate</name>
    </ligand>
</feature>
<feature type="binding site" evidence="1">
    <location>
        <begin position="65"/>
        <end position="66"/>
    </location>
    <ligand>
        <name>substrate</name>
    </ligand>
</feature>
<feature type="binding site" evidence="1">
    <location>
        <position position="98"/>
    </location>
    <ligand>
        <name>substrate</name>
    </ligand>
</feature>
<dbReference type="EC" id="4.2.3.3" evidence="1"/>
<dbReference type="EMBL" id="CP001614">
    <property type="protein sequence ID" value="ACR14449.1"/>
    <property type="molecule type" value="Genomic_DNA"/>
</dbReference>
<dbReference type="RefSeq" id="WP_015820563.1">
    <property type="nucleotide sequence ID" value="NC_012997.1"/>
</dbReference>
<dbReference type="SMR" id="C5BMN7"/>
<dbReference type="STRING" id="377629.TERTU_2791"/>
<dbReference type="GeneID" id="58410242"/>
<dbReference type="KEGG" id="ttu:TERTU_2791"/>
<dbReference type="eggNOG" id="COG1803">
    <property type="taxonomic scope" value="Bacteria"/>
</dbReference>
<dbReference type="HOGENOM" id="CLU_120420_0_1_6"/>
<dbReference type="OrthoDB" id="9787147at2"/>
<dbReference type="Proteomes" id="UP000009080">
    <property type="component" value="Chromosome"/>
</dbReference>
<dbReference type="GO" id="GO:0005829">
    <property type="term" value="C:cytosol"/>
    <property type="evidence" value="ECO:0007669"/>
    <property type="project" value="TreeGrafter"/>
</dbReference>
<dbReference type="GO" id="GO:0008929">
    <property type="term" value="F:methylglyoxal synthase activity"/>
    <property type="evidence" value="ECO:0007669"/>
    <property type="project" value="UniProtKB-UniRule"/>
</dbReference>
<dbReference type="GO" id="GO:0019242">
    <property type="term" value="P:methylglyoxal biosynthetic process"/>
    <property type="evidence" value="ECO:0007669"/>
    <property type="project" value="UniProtKB-UniRule"/>
</dbReference>
<dbReference type="CDD" id="cd01422">
    <property type="entry name" value="MGS"/>
    <property type="match status" value="1"/>
</dbReference>
<dbReference type="Gene3D" id="3.40.50.1380">
    <property type="entry name" value="Methylglyoxal synthase-like domain"/>
    <property type="match status" value="1"/>
</dbReference>
<dbReference type="HAMAP" id="MF_00549">
    <property type="entry name" value="Methylglyoxal_synth"/>
    <property type="match status" value="1"/>
</dbReference>
<dbReference type="InterPro" id="IPR004363">
    <property type="entry name" value="Methylgl_synth"/>
</dbReference>
<dbReference type="InterPro" id="IPR018148">
    <property type="entry name" value="Methylglyoxal_synth_AS"/>
</dbReference>
<dbReference type="InterPro" id="IPR011607">
    <property type="entry name" value="MGS-like_dom"/>
</dbReference>
<dbReference type="InterPro" id="IPR036914">
    <property type="entry name" value="MGS-like_dom_sf"/>
</dbReference>
<dbReference type="NCBIfam" id="TIGR00160">
    <property type="entry name" value="MGSA"/>
    <property type="match status" value="1"/>
</dbReference>
<dbReference type="NCBIfam" id="NF003559">
    <property type="entry name" value="PRK05234.1"/>
    <property type="match status" value="1"/>
</dbReference>
<dbReference type="PANTHER" id="PTHR30492">
    <property type="entry name" value="METHYLGLYOXAL SYNTHASE"/>
    <property type="match status" value="1"/>
</dbReference>
<dbReference type="PANTHER" id="PTHR30492:SF0">
    <property type="entry name" value="METHYLGLYOXAL SYNTHASE"/>
    <property type="match status" value="1"/>
</dbReference>
<dbReference type="Pfam" id="PF02142">
    <property type="entry name" value="MGS"/>
    <property type="match status" value="1"/>
</dbReference>
<dbReference type="PIRSF" id="PIRSF006614">
    <property type="entry name" value="Methylglyox_syn"/>
    <property type="match status" value="1"/>
</dbReference>
<dbReference type="SMART" id="SM00851">
    <property type="entry name" value="MGS"/>
    <property type="match status" value="1"/>
</dbReference>
<dbReference type="SUPFAM" id="SSF52335">
    <property type="entry name" value="Methylglyoxal synthase-like"/>
    <property type="match status" value="1"/>
</dbReference>
<dbReference type="PROSITE" id="PS01335">
    <property type="entry name" value="METHYLGLYOXAL_SYNTH"/>
    <property type="match status" value="1"/>
</dbReference>
<dbReference type="PROSITE" id="PS51855">
    <property type="entry name" value="MGS"/>
    <property type="match status" value="1"/>
</dbReference>
<comment type="function">
    <text evidence="1">Catalyzes the formation of methylglyoxal from dihydroxyacetone phosphate.</text>
</comment>
<comment type="catalytic activity">
    <reaction evidence="1">
        <text>dihydroxyacetone phosphate = methylglyoxal + phosphate</text>
        <dbReference type="Rhea" id="RHEA:17937"/>
        <dbReference type="ChEBI" id="CHEBI:17158"/>
        <dbReference type="ChEBI" id="CHEBI:43474"/>
        <dbReference type="ChEBI" id="CHEBI:57642"/>
        <dbReference type="EC" id="4.2.3.3"/>
    </reaction>
</comment>
<comment type="similarity">
    <text evidence="1">Belongs to the methylglyoxal synthase family.</text>
</comment>
<organism>
    <name type="scientific">Teredinibacter turnerae (strain ATCC 39867 / T7901)</name>
    <dbReference type="NCBI Taxonomy" id="377629"/>
    <lineage>
        <taxon>Bacteria</taxon>
        <taxon>Pseudomonadati</taxon>
        <taxon>Pseudomonadota</taxon>
        <taxon>Gammaproteobacteria</taxon>
        <taxon>Cellvibrionales</taxon>
        <taxon>Cellvibrionaceae</taxon>
        <taxon>Teredinibacter</taxon>
    </lineage>
</organism>
<reference key="1">
    <citation type="journal article" date="2009" name="PLoS ONE">
        <title>The complete genome of Teredinibacter turnerae T7901: an intracellular endosymbiont of marine wood-boring bivalves (shipworms).</title>
        <authorList>
            <person name="Yang J.C."/>
            <person name="Madupu R."/>
            <person name="Durkin A.S."/>
            <person name="Ekborg N.A."/>
            <person name="Pedamallu C.S."/>
            <person name="Hostetler J.B."/>
            <person name="Radune D."/>
            <person name="Toms B.S."/>
            <person name="Henrissat B."/>
            <person name="Coutinho P.M."/>
            <person name="Schwarz S."/>
            <person name="Field L."/>
            <person name="Trindade-Silva A.E."/>
            <person name="Soares C.A.G."/>
            <person name="Elshahawi S."/>
            <person name="Hanora A."/>
            <person name="Schmidt E.W."/>
            <person name="Haygood M.G."/>
            <person name="Posfai J."/>
            <person name="Benner J."/>
            <person name="Madinger C."/>
            <person name="Nove J."/>
            <person name="Anton B."/>
            <person name="Chaudhary K."/>
            <person name="Foster J."/>
            <person name="Holman A."/>
            <person name="Kumar S."/>
            <person name="Lessard P.A."/>
            <person name="Luyten Y.A."/>
            <person name="Slatko B."/>
            <person name="Wood N."/>
            <person name="Wu B."/>
            <person name="Teplitski M."/>
            <person name="Mougous J.D."/>
            <person name="Ward N."/>
            <person name="Eisen J.A."/>
            <person name="Badger J.H."/>
            <person name="Distel D.L."/>
        </authorList>
    </citation>
    <scope>NUCLEOTIDE SEQUENCE [LARGE SCALE GENOMIC DNA]</scope>
    <source>
        <strain>ATCC 39867 / T7901</strain>
    </source>
</reference>
<sequence>MEKKVQKLHDKKNIALVAHDNMKDPLCKWAKKHSFKLSAHQLYATGTTGHKLEEATGLSIRKCVSGPLGGDQQIGAKISEGEIDILIFFWDPFEPMPHDPDVKALLRIAAVWNIPVACNPASADFIISSQYINEEYERLVPDYDAYIAKRLG</sequence>
<keyword id="KW-0456">Lyase</keyword>
<keyword id="KW-1185">Reference proteome</keyword>
<evidence type="ECO:0000255" key="1">
    <source>
        <dbReference type="HAMAP-Rule" id="MF_00549"/>
    </source>
</evidence>
<accession>C5BMN7</accession>